<sequence>MSKRPSYAPPPTPAPATASSGITIPKPPKPPDKPLMPYMRYSRKVWDQVKASNPDLKLWEIGKIIGGMWRDLTDEEKQEYLNEYEAEKIEYNESMKAYHNSPAYLAYINAKSRAEAALEEESRQRQSRMEKGEPYMSIQPAEDPDDYDDGFSMKHTATARFQRNHRLISEILSESVVPDVRSVVTTARMQVLKRQVQSLMVHQRKLEAELLQIEERHQEKKRKFLESTDSFNNELKRLCGLKVEVDMEKIAAEIAQAEEQARKRQEEREKEAAEQAERSQGSIAPEEEQVANKAEEKKDEENIPMETEETHLEDTAENQQNGEEGTSTPEDKESGQEGVDSMEVEGTSDSNTGSESNSATVEEPPTDPVPEDEKKE</sequence>
<gene>
    <name type="primary">Smarce1</name>
    <name type="synonym">Baf57</name>
</gene>
<evidence type="ECO:0000250" key="1">
    <source>
        <dbReference type="UniProtKB" id="O54941"/>
    </source>
</evidence>
<evidence type="ECO:0000250" key="2">
    <source>
        <dbReference type="UniProtKB" id="Q969G3"/>
    </source>
</evidence>
<evidence type="ECO:0000255" key="3"/>
<evidence type="ECO:0000255" key="4">
    <source>
        <dbReference type="PROSITE-ProRule" id="PRU00267"/>
    </source>
</evidence>
<evidence type="ECO:0000256" key="5">
    <source>
        <dbReference type="SAM" id="MobiDB-lite"/>
    </source>
</evidence>
<evidence type="ECO:0000269" key="6">
    <source>
    </source>
</evidence>
<evidence type="ECO:0000303" key="7">
    <source>
    </source>
</evidence>
<evidence type="ECO:0000303" key="8">
    <source>
    </source>
</evidence>
<comment type="function">
    <text evidence="1 2">Involved in transcriptional activation and repression of select genes by chromatin remodeling (alteration of DNA-nucleosome topology). Component of SWI/SNF chromatin remodeling complexes that carry out key enzymatic activities, changing chromatin structure by altering DNA-histone contacts within a nucleosome in an ATP-dependent manner. Belongs to the neural progenitors-specific chromatin remodeling complex (npBAF complex) and the neuron-specific chromatin remodeling complex (nBAF complex). During neural development a switch from a stem/progenitor to a postmitotic chromatin remodeling mechanism occurs as neurons exit the cell cycle and become committed to their adult state. The transition from proliferating neural stem/progenitor cells to postmitotic neurons requires a switch in subunit composition of the npBAF and nBAF complexes. As neural progenitors exit mitosis and differentiate into neurons, npBAF complexes which contain ACTL6A/BAF53A and PHF10/BAF45A, are exchanged for homologous alternative ACTL6B/BAF53B and DPF1/BAF45B or DPF3/BAF45C subunits in neuron-specific complexes (nBAF). The npBAF complex is essential for the self-renewal/proliferative capacity of the multipotent neural stem cells. The nBAF complex along with CREST plays a role regulating the activity of genes essential for dendrite growth (By similarity). Required for the coactivation of estrogen responsive promoters by SWI/SNF complexes and the SRC/p160 family of histone acetyltransferases (HATs). Also specifically interacts with the CoREST corepressor resulting in repression of neuronal specific gene promoters in non-neuronal cells (By similarity).</text>
</comment>
<comment type="subunit">
    <text evidence="1 2 6">Component of the multiprotein chromatin-remodeling complexes SWI/SNF: SWI/SNF-A (BAF), SWI/SNF-B (PBAF) and related complexes. The canonical complex contains a catalytic subunit (either SMARCA4/BRG1/BAF190A or SMARCA2/BRM/BAF190B), and at least SMARCE1, ACTL6A/BAF53, SMARCC1/BAF155, SMARCC2/BAF170, and SMARCB1/SNF5/BAF47. Other subunits specific to each of the complexes may also be present permitting several possible combinations developmentally and tissue specific. Component of the BAF complex, which includes at least actin (ACTB), ARID1A/BAF250A, ARID1B/BAF250B, SMARCA2/BRM/BAF190B, SMARCA4/BRG1/BAF190A, ACTL6A/BAF53, ACTL6B/BAF53B, SMARCE1/BAF57, SMARCC1/BAF155, SMARCC2/BAF170, SMARCB1/SNF5/INI1, and one or more SMARCD1/BAF60A, SMARCD2/BAF60B, or SMARCD3/BAF60C. In muscle cells, the BAF complex also contains DPF3. Component of neural progenitors-specific chromatin remodeling complex (npBAF complex) composed of at least, ARID1A/BAF250A or ARID1B/BAF250B, SMARCD1/BAF60A, SMARCD3/BAF60C, SMARCA2/BRM/BAF190B, SMARCA4/BRG1/BAF190A, SMARCB1/BAF47, SMARCC1/BAF155, SMARCE1/BAF57, SMARCC2/BAF170, PHF10/BAF45A, ACTL6A/BAF53A and actin. Component of neuron-specific chromatin remodeling complex (nBAF complex) composed of at least, ARID1A/BAF250A or ARID1B/BAF250B, SMARCD1/BAF60A, SMARCD3/BAF60C, SMARCA2/BRM/BAF190B, SMARCA4/BRG1/BAF190A, SMARCB1/BAF47, SMARCC1/BAF155, SMARCE1/BAF57, SMARCC2/BAF170, DPF1/BAF45B, DPF3/BAF45C, ACTL6B/BAF53B and actin. May be a component of the SWI/SNF-B (PBAF) chromatin remodeling complex, at least composed of SMARCA4/BRG1, SMARCB1/BAF47/SNF5, ACTL6A/BAF53A or ACTL6B/BAF53B, SMARCE1/BAF57, SMARCD1/BAF60A, SMARCD2/BAF60B, perhaps SMARCD3/BAF60C, SMARCC1/BAF155, SMARCC2/BAF170, PBRM1/BAF180, ARID2/BAF200 and actin (ACTB) (By similarity). Interacts with BRDT (PubMed:22215678). Also binds to the SRC/p160 family of histone acetyltransferases (HATs) composed of NCOA1, NCOA2, and NCOA3. Interacts with RCOR1/CoREST, NR3C1 and ZMIM2/ZIMP7 (By similarity).</text>
</comment>
<comment type="subcellular location">
    <subcellularLocation>
        <location evidence="4">Nucleus</location>
    </subcellularLocation>
</comment>
<comment type="alternative products">
    <event type="alternative splicing"/>
    <isoform>
        <id>Q56A18-1</id>
        <name>1</name>
        <sequence type="displayed"/>
    </isoform>
    <isoform>
        <id>Q56A18-2</id>
        <name>2</name>
        <sequence type="described" ref="VSP_044513 VSP_044516"/>
    </isoform>
    <isoform>
        <id>Q56A18-3</id>
        <name>3</name>
        <sequence type="described" ref="VSP_044514"/>
    </isoform>
    <isoform>
        <id>Q56A18-4</id>
        <name>4</name>
        <sequence type="described" ref="VSP_044515"/>
    </isoform>
</comment>
<comment type="domain">
    <text evidence="1">The HMG domain is essential for CD4 silencing and CD8 activation; mutation of this domain blocks thymus development.</text>
</comment>
<comment type="PTM">
    <text evidence="2">Ubiquitinated by TRIP12, leading to its degradation by the proteasome. Ubiquitination is prevented upon interaction between TRIP12 and SMARCC1 (By similarity).</text>
</comment>
<feature type="chain" id="PRO_0000420477" description="SWI/SNF-related matrix-associated actin-dependent regulator of chromatin subfamily E member 1">
    <location>
        <begin position="1"/>
        <end position="376"/>
    </location>
</feature>
<feature type="DNA-binding region" description="HMG box" evidence="4">
    <location>
        <begin position="31"/>
        <end position="99"/>
    </location>
</feature>
<feature type="region of interest" description="Disordered" evidence="5">
    <location>
        <begin position="1"/>
        <end position="36"/>
    </location>
</feature>
<feature type="region of interest" description="Disordered" evidence="5">
    <location>
        <begin position="118"/>
        <end position="140"/>
    </location>
</feature>
<feature type="region of interest" description="Disordered" evidence="5">
    <location>
        <begin position="261"/>
        <end position="376"/>
    </location>
</feature>
<feature type="coiled-coil region" evidence="3">
    <location>
        <begin position="187"/>
        <end position="283"/>
    </location>
</feature>
<feature type="compositionally biased region" description="Basic and acidic residues" evidence="5">
    <location>
        <begin position="118"/>
        <end position="133"/>
    </location>
</feature>
<feature type="compositionally biased region" description="Basic and acidic residues" evidence="5">
    <location>
        <begin position="261"/>
        <end position="277"/>
    </location>
</feature>
<feature type="compositionally biased region" description="Polar residues" evidence="5">
    <location>
        <begin position="317"/>
        <end position="328"/>
    </location>
</feature>
<feature type="compositionally biased region" description="Polar residues" evidence="5">
    <location>
        <begin position="347"/>
        <end position="359"/>
    </location>
</feature>
<feature type="modified residue" description="Omega-N-methylarginine" evidence="2">
    <location>
        <position position="4"/>
    </location>
</feature>
<feature type="modified residue" description="Phosphoserine" evidence="2">
    <location>
        <position position="230"/>
    </location>
</feature>
<feature type="cross-link" description="Glycyl lysine isopeptide (Lys-Gly) (interchain with G-Cter in SUMO2)" evidence="2">
    <location>
        <position position="3"/>
    </location>
</feature>
<feature type="cross-link" description="Glycyl lysine isopeptide (Lys-Gly) (interchain with G-Cter in SUMO1); alternate" evidence="2">
    <location>
        <position position="57"/>
    </location>
</feature>
<feature type="cross-link" description="Glycyl lysine isopeptide (Lys-Gly) (interchain with G-Cter in SUMO2); alternate" evidence="2">
    <location>
        <position position="57"/>
    </location>
</feature>
<feature type="cross-link" description="Glycyl lysine isopeptide (Lys-Gly) (interchain with G-Cter in SUMO2)" evidence="2">
    <location>
        <position position="96"/>
    </location>
</feature>
<feature type="cross-link" description="Glycyl lysine isopeptide (Lys-Gly) (interchain with G-Cter in SUMO2)" evidence="2">
    <location>
        <position position="111"/>
    </location>
</feature>
<feature type="cross-link" description="Glycyl lysine isopeptide (Lys-Gly) (interchain with G-Cter in SUMO2)" evidence="2">
    <location>
        <position position="131"/>
    </location>
</feature>
<feature type="cross-link" description="Glycyl lysine isopeptide (Lys-Gly) (interchain with G-Cter in SUMO2)" evidence="2">
    <location>
        <position position="242"/>
    </location>
</feature>
<feature type="splice variant" id="VSP_044513" description="In isoform 2." evidence="7">
    <location>
        <begin position="1"/>
        <end position="67"/>
    </location>
</feature>
<feature type="splice variant" id="VSP_044514" description="In isoform 3." evidence="8">
    <location>
        <begin position="1"/>
        <end position="35"/>
    </location>
</feature>
<feature type="splice variant" id="VSP_044515" description="In isoform 4." evidence="8">
    <original>MSKRPSYAPPPTPAPA</original>
    <variation>MPSTPGFVGYNPYSHLAYNNYRLGGNPGTNSRV</variation>
    <location>
        <begin position="1"/>
        <end position="16"/>
    </location>
</feature>
<feature type="splice variant" id="VSP_044516" description="In isoform 2." evidence="7">
    <location>
        <begin position="234"/>
        <end position="235"/>
    </location>
</feature>
<dbReference type="EMBL" id="BC091314">
    <property type="protein sequence ID" value="AAH91314.1"/>
    <property type="molecule type" value="mRNA"/>
</dbReference>
<dbReference type="EMBL" id="BC092210">
    <property type="protein sequence ID" value="AAH92210.1"/>
    <property type="molecule type" value="mRNA"/>
</dbReference>
<dbReference type="EMBL" id="EU327027">
    <property type="protein sequence ID" value="ACA81401.1"/>
    <property type="molecule type" value="mRNA"/>
</dbReference>
<dbReference type="EMBL" id="EU327028">
    <property type="protein sequence ID" value="ACA81402.1"/>
    <property type="molecule type" value="mRNA"/>
</dbReference>
<dbReference type="EMBL" id="EU327029">
    <property type="protein sequence ID" value="ACA81403.1"/>
    <property type="molecule type" value="mRNA"/>
</dbReference>
<dbReference type="EMBL" id="EU327030">
    <property type="protein sequence ID" value="ACA81404.1"/>
    <property type="molecule type" value="mRNA"/>
</dbReference>
<dbReference type="EMBL" id="EU327031">
    <property type="protein sequence ID" value="ACA81405.1"/>
    <property type="molecule type" value="mRNA"/>
</dbReference>
<dbReference type="RefSeq" id="NP_001020164.1">
    <molecule id="Q56A18-1"/>
    <property type="nucleotide sequence ID" value="NM_001024993.2"/>
</dbReference>
<dbReference type="RefSeq" id="XP_038942010.1">
    <molecule id="Q56A18-3"/>
    <property type="nucleotide sequence ID" value="XM_039086082.2"/>
</dbReference>
<dbReference type="RefSeq" id="XP_038942011.1">
    <molecule id="Q56A18-3"/>
    <property type="nucleotide sequence ID" value="XM_039086083.2"/>
</dbReference>
<dbReference type="RefSeq" id="XP_038942012.1">
    <molecule id="Q56A18-3"/>
    <property type="nucleotide sequence ID" value="XM_039086084.2"/>
</dbReference>
<dbReference type="RefSeq" id="XP_038942013.1">
    <molecule id="Q56A18-4"/>
    <property type="nucleotide sequence ID" value="XM_039086085.2"/>
</dbReference>
<dbReference type="SMR" id="Q56A18"/>
<dbReference type="BioGRID" id="257563">
    <property type="interactions" value="2"/>
</dbReference>
<dbReference type="FunCoup" id="Q56A18">
    <property type="interactions" value="3516"/>
</dbReference>
<dbReference type="STRING" id="10116.ENSRNOP00000014230"/>
<dbReference type="GlyGen" id="Q56A18">
    <property type="glycosylation" value="2 sites"/>
</dbReference>
<dbReference type="iPTMnet" id="Q56A18"/>
<dbReference type="PhosphoSitePlus" id="Q56A18"/>
<dbReference type="jPOST" id="Q56A18"/>
<dbReference type="PaxDb" id="10116-ENSRNOP00000014230"/>
<dbReference type="PeptideAtlas" id="Q56A18"/>
<dbReference type="Ensembl" id="ENSRNOT00000014230.8">
    <molecule id="Q56A18-1"/>
    <property type="protein sequence ID" value="ENSRNOP00000014230.7"/>
    <property type="gene ID" value="ENSRNOG00000010676.8"/>
</dbReference>
<dbReference type="GeneID" id="303518"/>
<dbReference type="KEGG" id="rno:303518"/>
<dbReference type="UCSC" id="RGD:1304726">
    <property type="organism name" value="rat"/>
</dbReference>
<dbReference type="AGR" id="RGD:1304726"/>
<dbReference type="CTD" id="6605"/>
<dbReference type="RGD" id="1304726">
    <property type="gene designation" value="Smarce1"/>
</dbReference>
<dbReference type="eggNOG" id="KOG4715">
    <property type="taxonomic scope" value="Eukaryota"/>
</dbReference>
<dbReference type="GeneTree" id="ENSGT00390000003628"/>
<dbReference type="InParanoid" id="Q56A18"/>
<dbReference type="OrthoDB" id="30931at2759"/>
<dbReference type="Reactome" id="R-RNO-3214858">
    <property type="pathway name" value="RMTs methylate histone arginines"/>
</dbReference>
<dbReference type="Reactome" id="R-RNO-8939243">
    <property type="pathway name" value="RUNX1 interacts with co-factors whose precise effect on RUNX1 targets is not known"/>
</dbReference>
<dbReference type="PRO" id="PR:Q56A18"/>
<dbReference type="Proteomes" id="UP000002494">
    <property type="component" value="Chromosome 10"/>
</dbReference>
<dbReference type="GO" id="GO:0071565">
    <property type="term" value="C:nBAF complex"/>
    <property type="evidence" value="ECO:0000266"/>
    <property type="project" value="RGD"/>
</dbReference>
<dbReference type="GO" id="GO:0071564">
    <property type="term" value="C:npBAF complex"/>
    <property type="evidence" value="ECO:0000266"/>
    <property type="project" value="RGD"/>
</dbReference>
<dbReference type="GO" id="GO:0016514">
    <property type="term" value="C:SWI/SNF complex"/>
    <property type="evidence" value="ECO:0000266"/>
    <property type="project" value="RGD"/>
</dbReference>
<dbReference type="GO" id="GO:0003677">
    <property type="term" value="F:DNA binding"/>
    <property type="evidence" value="ECO:0007669"/>
    <property type="project" value="UniProtKB-KW"/>
</dbReference>
<dbReference type="GO" id="GO:0008080">
    <property type="term" value="F:N-acetyltransferase activity"/>
    <property type="evidence" value="ECO:0000266"/>
    <property type="project" value="RGD"/>
</dbReference>
<dbReference type="GO" id="GO:0016922">
    <property type="term" value="F:nuclear receptor binding"/>
    <property type="evidence" value="ECO:0000266"/>
    <property type="project" value="RGD"/>
</dbReference>
<dbReference type="GO" id="GO:0003723">
    <property type="term" value="F:RNA binding"/>
    <property type="evidence" value="ECO:0000266"/>
    <property type="project" value="RGD"/>
</dbReference>
<dbReference type="GO" id="GO:0006338">
    <property type="term" value="P:chromatin remodeling"/>
    <property type="evidence" value="ECO:0000266"/>
    <property type="project" value="RGD"/>
</dbReference>
<dbReference type="GO" id="GO:0045892">
    <property type="term" value="P:negative regulation of DNA-templated transcription"/>
    <property type="evidence" value="ECO:0000315"/>
    <property type="project" value="RGD"/>
</dbReference>
<dbReference type="GO" id="GO:0022008">
    <property type="term" value="P:neurogenesis"/>
    <property type="evidence" value="ECO:0000266"/>
    <property type="project" value="RGD"/>
</dbReference>
<dbReference type="GO" id="GO:0006337">
    <property type="term" value="P:nucleosome disassembly"/>
    <property type="evidence" value="ECO:0000266"/>
    <property type="project" value="RGD"/>
</dbReference>
<dbReference type="GO" id="GO:0007286">
    <property type="term" value="P:spermatid development"/>
    <property type="evidence" value="ECO:0000270"/>
    <property type="project" value="RGD"/>
</dbReference>
<dbReference type="CDD" id="cd21983">
    <property type="entry name" value="HMG-box_SMARCE1"/>
    <property type="match status" value="1"/>
</dbReference>
<dbReference type="FunFam" id="1.10.30.10:FF:000011">
    <property type="entry name" value="Putative SWI/SNF-related matrix-associated actin-dependent regulator of chromatin subfamily E member 1"/>
    <property type="match status" value="1"/>
</dbReference>
<dbReference type="Gene3D" id="1.10.30.10">
    <property type="entry name" value="High mobility group box domain"/>
    <property type="match status" value="1"/>
</dbReference>
<dbReference type="InterPro" id="IPR009071">
    <property type="entry name" value="HMG_box_dom"/>
</dbReference>
<dbReference type="InterPro" id="IPR036910">
    <property type="entry name" value="HMG_box_dom_sf"/>
</dbReference>
<dbReference type="PANTHER" id="PTHR46232">
    <property type="entry name" value="SMARCE1 REGULATOR OF CHROMATIN"/>
    <property type="match status" value="1"/>
</dbReference>
<dbReference type="PANTHER" id="PTHR46232:SF1">
    <property type="entry name" value="SWI_SNF-RELATED MATRIX-ASSOCIATED ACTIN-DEPENDENT REGULATOR OF CHROMATIN SUBFAMILY E MEMBER 1"/>
    <property type="match status" value="1"/>
</dbReference>
<dbReference type="Pfam" id="PF00505">
    <property type="entry name" value="HMG_box"/>
    <property type="match status" value="1"/>
</dbReference>
<dbReference type="SMART" id="SM00398">
    <property type="entry name" value="HMG"/>
    <property type="match status" value="1"/>
</dbReference>
<dbReference type="SUPFAM" id="SSF47095">
    <property type="entry name" value="HMG-box"/>
    <property type="match status" value="1"/>
</dbReference>
<dbReference type="PROSITE" id="PS50118">
    <property type="entry name" value="HMG_BOX_2"/>
    <property type="match status" value="1"/>
</dbReference>
<accession>Q56A18</accession>
<accession>C0IMX4</accession>
<accession>C0IMX5</accession>
<accession>C0IMX6</accession>
<accession>Q5BJV2</accession>
<organism>
    <name type="scientific">Rattus norvegicus</name>
    <name type="common">Rat</name>
    <dbReference type="NCBI Taxonomy" id="10116"/>
    <lineage>
        <taxon>Eukaryota</taxon>
        <taxon>Metazoa</taxon>
        <taxon>Chordata</taxon>
        <taxon>Craniata</taxon>
        <taxon>Vertebrata</taxon>
        <taxon>Euteleostomi</taxon>
        <taxon>Mammalia</taxon>
        <taxon>Eutheria</taxon>
        <taxon>Euarchontoglires</taxon>
        <taxon>Glires</taxon>
        <taxon>Rodentia</taxon>
        <taxon>Myomorpha</taxon>
        <taxon>Muroidea</taxon>
        <taxon>Muridae</taxon>
        <taxon>Murinae</taxon>
        <taxon>Rattus</taxon>
    </lineage>
</organism>
<proteinExistence type="evidence at protein level"/>
<reference key="1">
    <citation type="journal article" date="2004" name="Genome Res.">
        <title>The status, quality, and expansion of the NIH full-length cDNA project: the Mammalian Gene Collection (MGC).</title>
        <authorList>
            <consortium name="The MGC Project Team"/>
        </authorList>
    </citation>
    <scope>NUCLEOTIDE SEQUENCE [LARGE SCALE MRNA] (ISOFORMS 1 AND 2)</scope>
    <source>
        <tissue>Brain</tissue>
    </source>
</reference>
<reference key="2">
    <citation type="journal article" date="2009" name="J. Neurochem.">
        <title>N-terminally truncated BAF57 isoforms contribute to the diversity of SWI/SNF complexes in neurons.</title>
        <authorList>
            <person name="Kazantseva A."/>
            <person name="Sepp M."/>
            <person name="Kazantseva J."/>
            <person name="Sadam H."/>
            <person name="Pruunsild P."/>
            <person name="Timmusk T."/>
            <person name="Neuman T."/>
            <person name="Palm K."/>
        </authorList>
    </citation>
    <scope>NUCLEOTIDE SEQUENCE [MRNA] OF 1-142 (ISOFORMS 1; 3 AND 4)</scope>
    <source>
        <tissue>Brain</tissue>
    </source>
</reference>
<reference key="3">
    <citation type="journal article" date="2012" name="J. Biol. Chem.">
        <title>Insights into role of bromodomain, testis-specific (Brdt) in acetylated histone H4-dependent chromatin remodeling in mammalian spermiogenesis.</title>
        <authorList>
            <person name="Dhar S."/>
            <person name="Thota A."/>
            <person name="Rao M.R."/>
        </authorList>
    </citation>
    <scope>INTERACTION WITH BRDT</scope>
</reference>
<protein>
    <recommendedName>
        <fullName>SWI/SNF-related matrix-associated actin-dependent regulator of chromatin subfamily E member 1</fullName>
    </recommendedName>
    <alternativeName>
        <fullName>BRG1-associated factor 57</fullName>
        <shortName>BAF57</shortName>
    </alternativeName>
</protein>
<keyword id="KW-0025">Alternative splicing</keyword>
<keyword id="KW-0156">Chromatin regulator</keyword>
<keyword id="KW-0175">Coiled coil</keyword>
<keyword id="KW-0238">DNA-binding</keyword>
<keyword id="KW-1017">Isopeptide bond</keyword>
<keyword id="KW-0488">Methylation</keyword>
<keyword id="KW-0524">Neurogenesis</keyword>
<keyword id="KW-0539">Nucleus</keyword>
<keyword id="KW-0597">Phosphoprotein</keyword>
<keyword id="KW-1185">Reference proteome</keyword>
<keyword id="KW-0832">Ubl conjugation</keyword>
<name>SMCE1_RAT</name>